<keyword id="KW-0687">Ribonucleoprotein</keyword>
<keyword id="KW-0689">Ribosomal protein</keyword>
<keyword id="KW-0694">RNA-binding</keyword>
<keyword id="KW-0699">rRNA-binding</keyword>
<feature type="chain" id="PRO_0000111114" description="Small ribosomal subunit protein bS18">
    <location>
        <begin position="1"/>
        <end position="77"/>
    </location>
</feature>
<protein>
    <recommendedName>
        <fullName evidence="1">Small ribosomal subunit protein bS18</fullName>
    </recommendedName>
    <alternativeName>
        <fullName evidence="2">30S ribosomal protein S18</fullName>
    </alternativeName>
</protein>
<evidence type="ECO:0000255" key="1">
    <source>
        <dbReference type="HAMAP-Rule" id="MF_00270"/>
    </source>
</evidence>
<evidence type="ECO:0000305" key="2"/>
<proteinExistence type="inferred from homology"/>
<gene>
    <name evidence="1" type="primary">rpsR</name>
    <name type="ordered locus">BT9727_5153</name>
</gene>
<comment type="function">
    <text evidence="1">Binds as a heterodimer with protein bS6 to the central domain of the 16S rRNA, where it helps stabilize the platform of the 30S subunit.</text>
</comment>
<comment type="subunit">
    <text evidence="1">Part of the 30S ribosomal subunit. Forms a tight heterodimer with protein bS6.</text>
</comment>
<comment type="similarity">
    <text evidence="1">Belongs to the bacterial ribosomal protein bS18 family.</text>
</comment>
<sequence>MAGRKGGRAKRRKVCFFTSNGITRIDYKDVDLLKRFVSERGKILPRRVTGTSAKYQRKLTVAIKRARQMALLPYVGE</sequence>
<name>RS18_BACHK</name>
<dbReference type="EMBL" id="AE017355">
    <property type="protein sequence ID" value="AAT63406.1"/>
    <property type="molecule type" value="Genomic_DNA"/>
</dbReference>
<dbReference type="RefSeq" id="WP_000918874.1">
    <property type="nucleotide sequence ID" value="NC_005957.1"/>
</dbReference>
<dbReference type="RefSeq" id="YP_039462.1">
    <property type="nucleotide sequence ID" value="NC_005957.1"/>
</dbReference>
<dbReference type="SMR" id="Q6HAG4"/>
<dbReference type="GeneID" id="92885945"/>
<dbReference type="KEGG" id="btk:BT9727_5153"/>
<dbReference type="PATRIC" id="fig|281309.8.peg.5478"/>
<dbReference type="HOGENOM" id="CLU_148710_2_2_9"/>
<dbReference type="PRO" id="PR:Q6HAG4"/>
<dbReference type="Proteomes" id="UP000001301">
    <property type="component" value="Chromosome"/>
</dbReference>
<dbReference type="GO" id="GO:0022627">
    <property type="term" value="C:cytosolic small ribosomal subunit"/>
    <property type="evidence" value="ECO:0007669"/>
    <property type="project" value="TreeGrafter"/>
</dbReference>
<dbReference type="GO" id="GO:0070181">
    <property type="term" value="F:small ribosomal subunit rRNA binding"/>
    <property type="evidence" value="ECO:0007669"/>
    <property type="project" value="TreeGrafter"/>
</dbReference>
<dbReference type="GO" id="GO:0003735">
    <property type="term" value="F:structural constituent of ribosome"/>
    <property type="evidence" value="ECO:0007669"/>
    <property type="project" value="InterPro"/>
</dbReference>
<dbReference type="GO" id="GO:0006412">
    <property type="term" value="P:translation"/>
    <property type="evidence" value="ECO:0007669"/>
    <property type="project" value="UniProtKB-UniRule"/>
</dbReference>
<dbReference type="FunFam" id="4.10.640.10:FF:000003">
    <property type="entry name" value="30S ribosomal protein S18"/>
    <property type="match status" value="1"/>
</dbReference>
<dbReference type="Gene3D" id="4.10.640.10">
    <property type="entry name" value="Ribosomal protein S18"/>
    <property type="match status" value="1"/>
</dbReference>
<dbReference type="HAMAP" id="MF_00270">
    <property type="entry name" value="Ribosomal_bS18"/>
    <property type="match status" value="1"/>
</dbReference>
<dbReference type="InterPro" id="IPR001648">
    <property type="entry name" value="Ribosomal_bS18"/>
</dbReference>
<dbReference type="InterPro" id="IPR018275">
    <property type="entry name" value="Ribosomal_bS18_CS"/>
</dbReference>
<dbReference type="InterPro" id="IPR036870">
    <property type="entry name" value="Ribosomal_bS18_sf"/>
</dbReference>
<dbReference type="NCBIfam" id="TIGR00165">
    <property type="entry name" value="S18"/>
    <property type="match status" value="1"/>
</dbReference>
<dbReference type="PANTHER" id="PTHR13479">
    <property type="entry name" value="30S RIBOSOMAL PROTEIN S18"/>
    <property type="match status" value="1"/>
</dbReference>
<dbReference type="PANTHER" id="PTHR13479:SF40">
    <property type="entry name" value="SMALL RIBOSOMAL SUBUNIT PROTEIN BS18M"/>
    <property type="match status" value="1"/>
</dbReference>
<dbReference type="Pfam" id="PF01084">
    <property type="entry name" value="Ribosomal_S18"/>
    <property type="match status" value="1"/>
</dbReference>
<dbReference type="PRINTS" id="PR00974">
    <property type="entry name" value="RIBOSOMALS18"/>
</dbReference>
<dbReference type="SUPFAM" id="SSF46911">
    <property type="entry name" value="Ribosomal protein S18"/>
    <property type="match status" value="1"/>
</dbReference>
<dbReference type="PROSITE" id="PS00057">
    <property type="entry name" value="RIBOSOMAL_S18"/>
    <property type="match status" value="1"/>
</dbReference>
<accession>Q6HAG4</accession>
<organism>
    <name type="scientific">Bacillus thuringiensis subsp. konkukian (strain 97-27)</name>
    <dbReference type="NCBI Taxonomy" id="281309"/>
    <lineage>
        <taxon>Bacteria</taxon>
        <taxon>Bacillati</taxon>
        <taxon>Bacillota</taxon>
        <taxon>Bacilli</taxon>
        <taxon>Bacillales</taxon>
        <taxon>Bacillaceae</taxon>
        <taxon>Bacillus</taxon>
        <taxon>Bacillus cereus group</taxon>
    </lineage>
</organism>
<reference key="1">
    <citation type="journal article" date="2006" name="J. Bacteriol.">
        <title>Pathogenomic sequence analysis of Bacillus cereus and Bacillus thuringiensis isolates closely related to Bacillus anthracis.</title>
        <authorList>
            <person name="Han C.S."/>
            <person name="Xie G."/>
            <person name="Challacombe J.F."/>
            <person name="Altherr M.R."/>
            <person name="Bhotika S.S."/>
            <person name="Bruce D."/>
            <person name="Campbell C.S."/>
            <person name="Campbell M.L."/>
            <person name="Chen J."/>
            <person name="Chertkov O."/>
            <person name="Cleland C."/>
            <person name="Dimitrijevic M."/>
            <person name="Doggett N.A."/>
            <person name="Fawcett J.J."/>
            <person name="Glavina T."/>
            <person name="Goodwin L.A."/>
            <person name="Hill K.K."/>
            <person name="Hitchcock P."/>
            <person name="Jackson P.J."/>
            <person name="Keim P."/>
            <person name="Kewalramani A.R."/>
            <person name="Longmire J."/>
            <person name="Lucas S."/>
            <person name="Malfatti S."/>
            <person name="McMurry K."/>
            <person name="Meincke L.J."/>
            <person name="Misra M."/>
            <person name="Moseman B.L."/>
            <person name="Mundt M."/>
            <person name="Munk A.C."/>
            <person name="Okinaka R.T."/>
            <person name="Parson-Quintana B."/>
            <person name="Reilly L.P."/>
            <person name="Richardson P."/>
            <person name="Robinson D.L."/>
            <person name="Rubin E."/>
            <person name="Saunders E."/>
            <person name="Tapia R."/>
            <person name="Tesmer J.G."/>
            <person name="Thayer N."/>
            <person name="Thompson L.S."/>
            <person name="Tice H."/>
            <person name="Ticknor L.O."/>
            <person name="Wills P.L."/>
            <person name="Brettin T.S."/>
            <person name="Gilna P."/>
        </authorList>
    </citation>
    <scope>NUCLEOTIDE SEQUENCE [LARGE SCALE GENOMIC DNA]</scope>
    <source>
        <strain>97-27</strain>
    </source>
</reference>